<name>BR1_LITSY</name>
<reference key="1">
    <citation type="journal article" date="2000" name="FEBS Lett.">
        <title>Induction of synthesis of an antimicrobial peptide in the skin of the freeze-tolerant frog, Rana sylvatica, in response to environmental stimuli.</title>
        <authorList>
            <person name="Matutte B."/>
            <person name="Storey K.B."/>
            <person name="Knoop F.C."/>
            <person name="Conlon J.M."/>
        </authorList>
    </citation>
    <scope>PROTEIN SEQUENCE</scope>
    <scope>FUNCTION</scope>
    <scope>MASS SPECTROMETRY</scope>
    <source>
        <tissue>Skin secretion</tissue>
    </source>
</reference>
<dbReference type="GO" id="GO:0005576">
    <property type="term" value="C:extracellular region"/>
    <property type="evidence" value="ECO:0007669"/>
    <property type="project" value="UniProtKB-SubCell"/>
</dbReference>
<dbReference type="GO" id="GO:0042742">
    <property type="term" value="P:defense response to bacterium"/>
    <property type="evidence" value="ECO:0007669"/>
    <property type="project" value="UniProtKB-KW"/>
</dbReference>
<dbReference type="InterPro" id="IPR012520">
    <property type="entry name" value="Antimicrobial_frog_1"/>
</dbReference>
<dbReference type="Pfam" id="PF08018">
    <property type="entry name" value="Antimicrobial_1"/>
    <property type="match status" value="1"/>
</dbReference>
<sequence>FLPVVAGLAAKVLPSIICAVTKKC</sequence>
<evidence type="ECO:0000269" key="1">
    <source>
    </source>
</evidence>
<evidence type="ECO:0000305" key="2"/>
<proteinExistence type="evidence at protein level"/>
<accession>P82871</accession>
<keyword id="KW-0878">Amphibian defense peptide</keyword>
<keyword id="KW-0044">Antibiotic</keyword>
<keyword id="KW-0929">Antimicrobial</keyword>
<keyword id="KW-0903">Direct protein sequencing</keyword>
<keyword id="KW-1015">Disulfide bond</keyword>
<keyword id="KW-0964">Secreted</keyword>
<organism>
    <name type="scientific">Lithobates sylvaticus</name>
    <name type="common">Wood frog</name>
    <name type="synonym">Rana sylvatica</name>
    <dbReference type="NCBI Taxonomy" id="45438"/>
    <lineage>
        <taxon>Eukaryota</taxon>
        <taxon>Metazoa</taxon>
        <taxon>Chordata</taxon>
        <taxon>Craniata</taxon>
        <taxon>Vertebrata</taxon>
        <taxon>Euteleostomi</taxon>
        <taxon>Amphibia</taxon>
        <taxon>Batrachia</taxon>
        <taxon>Anura</taxon>
        <taxon>Neobatrachia</taxon>
        <taxon>Ranoidea</taxon>
        <taxon>Ranidae</taxon>
        <taxon>Lithobates</taxon>
    </lineage>
</organism>
<feature type="peptide" id="PRO_0000043549" description="Brevinin-1SY">
    <location>
        <begin position="1"/>
        <end position="24"/>
    </location>
</feature>
<feature type="disulfide bond">
    <location>
        <begin position="18"/>
        <end position="24"/>
    </location>
</feature>
<protein>
    <recommendedName>
        <fullName>Brevinin-1SY</fullName>
    </recommendedName>
</protein>
<comment type="function">
    <text evidence="1">Antibacterial activity against Gram-positive bacterium S.aureus and Gram-negative bacterium E.coli.</text>
</comment>
<comment type="subcellular location">
    <subcellularLocation>
        <location>Secreted</location>
    </subcellularLocation>
</comment>
<comment type="tissue specificity">
    <text>Expressed by the skin glands.</text>
</comment>
<comment type="mass spectrometry"/>
<comment type="similarity">
    <text evidence="2">Belongs to the frog skin active peptide (FSAP) family. Brevinin subfamily.</text>
</comment>